<dbReference type="EMBL" id="D78363">
    <property type="protein sequence ID" value="BAA11375.1"/>
    <property type="molecule type" value="Genomic_DNA"/>
</dbReference>
<dbReference type="EMBL" id="D78587">
    <property type="protein sequence ID" value="BAA11424.1"/>
    <property type="molecule type" value="Genomic_DNA"/>
</dbReference>
<dbReference type="PIR" id="JC5042">
    <property type="entry name" value="JC5042"/>
</dbReference>
<dbReference type="SMR" id="Q93126"/>
<dbReference type="OrthoDB" id="6358729at2759"/>
<dbReference type="GO" id="GO:0005886">
    <property type="term" value="C:plasma membrane"/>
    <property type="evidence" value="ECO:0007669"/>
    <property type="project" value="UniProtKB-SubCell"/>
</dbReference>
<dbReference type="GO" id="GO:0004935">
    <property type="term" value="F:adrenergic receptor activity"/>
    <property type="evidence" value="ECO:0007669"/>
    <property type="project" value="InterPro"/>
</dbReference>
<dbReference type="CDD" id="cd15063">
    <property type="entry name" value="7tmA_Octopamine_R"/>
    <property type="match status" value="1"/>
</dbReference>
<dbReference type="Gene3D" id="1.20.1070.10">
    <property type="entry name" value="Rhodopsin 7-helix transmembrane proteins"/>
    <property type="match status" value="2"/>
</dbReference>
<dbReference type="InterPro" id="IPR002233">
    <property type="entry name" value="ADR_fam"/>
</dbReference>
<dbReference type="InterPro" id="IPR000276">
    <property type="entry name" value="GPCR_Rhodpsn"/>
</dbReference>
<dbReference type="InterPro" id="IPR017452">
    <property type="entry name" value="GPCR_Rhodpsn_7TM"/>
</dbReference>
<dbReference type="PANTHER" id="PTHR24248">
    <property type="entry name" value="ADRENERGIC RECEPTOR-RELATED G-PROTEIN COUPLED RECEPTOR"/>
    <property type="match status" value="1"/>
</dbReference>
<dbReference type="PANTHER" id="PTHR24248:SF174">
    <property type="entry name" value="TYRAMINE_OCTOPAMINE RECEPTOR"/>
    <property type="match status" value="1"/>
</dbReference>
<dbReference type="Pfam" id="PF00001">
    <property type="entry name" value="7tm_1"/>
    <property type="match status" value="1"/>
</dbReference>
<dbReference type="PRINTS" id="PR01103">
    <property type="entry name" value="ADRENERGICR"/>
</dbReference>
<dbReference type="PRINTS" id="PR00237">
    <property type="entry name" value="GPCRRHODOPSN"/>
</dbReference>
<dbReference type="SMART" id="SM01381">
    <property type="entry name" value="7TM_GPCR_Srsx"/>
    <property type="match status" value="1"/>
</dbReference>
<dbReference type="SUPFAM" id="SSF81321">
    <property type="entry name" value="Family A G protein-coupled receptor-like"/>
    <property type="match status" value="1"/>
</dbReference>
<dbReference type="PROSITE" id="PS00237">
    <property type="entry name" value="G_PROTEIN_RECEP_F1_1"/>
    <property type="match status" value="1"/>
</dbReference>
<dbReference type="PROSITE" id="PS50262">
    <property type="entry name" value="G_PROTEIN_RECEP_F1_2"/>
    <property type="match status" value="1"/>
</dbReference>
<organism>
    <name type="scientific">Amphibalanus amphitrite</name>
    <name type="common">Striped barnacle</name>
    <name type="synonym">Balanus amphitrite</name>
    <dbReference type="NCBI Taxonomy" id="1232801"/>
    <lineage>
        <taxon>Eukaryota</taxon>
        <taxon>Metazoa</taxon>
        <taxon>Ecdysozoa</taxon>
        <taxon>Arthropoda</taxon>
        <taxon>Crustacea</taxon>
        <taxon>Multicrustacea</taxon>
        <taxon>Cirripedia</taxon>
        <taxon>Thoracica</taxon>
        <taxon>Thoracicalcarea</taxon>
        <taxon>Balanomorpha</taxon>
        <taxon>Balanoidea</taxon>
        <taxon>Balanidae</taxon>
        <taxon>Amphibalaninae</taxon>
        <taxon>Amphibalanus</taxon>
    </lineage>
</organism>
<protein>
    <recommendedName>
        <fullName>Probable G-protein coupled receptor No9</fullName>
    </recommendedName>
</protein>
<comment type="function">
    <text>Orphan G-protein coupled receptor.</text>
</comment>
<comment type="subcellular location">
    <subcellularLocation>
        <location>Cell membrane</location>
        <topology>Multi-pass membrane protein</topology>
    </subcellularLocation>
</comment>
<comment type="similarity">
    <text evidence="3">Belongs to the G-protein coupled receptor 1 family.</text>
</comment>
<reference key="1">
    <citation type="journal article" date="1996" name="Gene">
        <title>Molecular cloning of a new member of the putative G protein-coupled receptor gene from barnacle Balanus amphitrite.</title>
        <authorList>
            <person name="Isoai A."/>
            <person name="Kawahara H."/>
            <person name="Okazaki Y."/>
            <person name="Shizuri Y."/>
        </authorList>
    </citation>
    <scope>NUCLEOTIDE SEQUENCE [GENOMIC DNA]</scope>
    <source>
        <strain>Darwin</strain>
    </source>
</reference>
<accession>Q93126</accession>
<accession>Q93128</accession>
<feature type="chain" id="PRO_0000069659" description="Probable G-protein coupled receptor No9">
    <location>
        <begin position="1"/>
        <end position="476"/>
    </location>
</feature>
<feature type="topological domain" description="Extracellular" evidence="2">
    <location>
        <begin position="1"/>
        <end position="36"/>
    </location>
</feature>
<feature type="transmembrane region" description="Helical; Name=1" evidence="2">
    <location>
        <begin position="37"/>
        <end position="60"/>
    </location>
</feature>
<feature type="topological domain" description="Cytoplasmic" evidence="2">
    <location>
        <begin position="61"/>
        <end position="69"/>
    </location>
</feature>
<feature type="transmembrane region" description="Helical; Name=2" evidence="2">
    <location>
        <begin position="70"/>
        <end position="93"/>
    </location>
</feature>
<feature type="topological domain" description="Extracellular" evidence="2">
    <location>
        <begin position="94"/>
        <end position="103"/>
    </location>
</feature>
<feature type="transmembrane region" description="Helical; Name=3" evidence="2">
    <location>
        <begin position="104"/>
        <end position="127"/>
    </location>
</feature>
<feature type="topological domain" description="Cytoplasmic" evidence="2">
    <location>
        <begin position="128"/>
        <end position="152"/>
    </location>
</feature>
<feature type="transmembrane region" description="Helical; Name=4" evidence="2">
    <location>
        <begin position="153"/>
        <end position="172"/>
    </location>
</feature>
<feature type="topological domain" description="Extracellular" evidence="2">
    <location>
        <begin position="173"/>
        <end position="200"/>
    </location>
</feature>
<feature type="transmembrane region" description="Helical; Name=5" evidence="2">
    <location>
        <begin position="201"/>
        <end position="221"/>
    </location>
</feature>
<feature type="topological domain" description="Cytoplasmic" evidence="2">
    <location>
        <begin position="222"/>
        <end position="375"/>
    </location>
</feature>
<feature type="transmembrane region" description="Helical; Name=6" evidence="2">
    <location>
        <begin position="376"/>
        <end position="396"/>
    </location>
</feature>
<feature type="topological domain" description="Extracellular" evidence="2">
    <location>
        <begin position="397"/>
        <end position="406"/>
    </location>
</feature>
<feature type="transmembrane region" description="Helical; Name=7" evidence="2">
    <location>
        <begin position="407"/>
        <end position="430"/>
    </location>
</feature>
<feature type="topological domain" description="Cytoplasmic" evidence="2">
    <location>
        <begin position="431"/>
        <end position="476"/>
    </location>
</feature>
<feature type="region of interest" description="Disordered" evidence="4">
    <location>
        <begin position="266"/>
        <end position="293"/>
    </location>
</feature>
<feature type="region of interest" description="Disordered" evidence="4">
    <location>
        <begin position="317"/>
        <end position="351"/>
    </location>
</feature>
<feature type="compositionally biased region" description="Low complexity" evidence="4">
    <location>
        <begin position="266"/>
        <end position="278"/>
    </location>
</feature>
<feature type="site" description="Implicated in ligand binding" evidence="1">
    <location>
        <position position="113"/>
    </location>
</feature>
<feature type="site" description="Implicated in ligand binding" evidence="1">
    <location>
        <position position="208"/>
    </location>
</feature>
<feature type="glycosylation site" description="N-linked (GlcNAc...) asparagine" evidence="2">
    <location>
        <position position="13"/>
    </location>
</feature>
<feature type="glycosylation site" description="N-linked (GlcNAc...) asparagine" evidence="2">
    <location>
        <position position="17"/>
    </location>
</feature>
<feature type="disulfide bond" evidence="3">
    <location>
        <begin position="106"/>
        <end position="192"/>
    </location>
</feature>
<feature type="sequence conflict" description="In Ref. 1; BAA11424." evidence="5" ref="1">
    <original>R</original>
    <variation>A</variation>
    <location>
        <position position="454"/>
    </location>
</feature>
<evidence type="ECO:0000250" key="1"/>
<evidence type="ECO:0000255" key="2"/>
<evidence type="ECO:0000255" key="3">
    <source>
        <dbReference type="PROSITE-ProRule" id="PRU00521"/>
    </source>
</evidence>
<evidence type="ECO:0000256" key="4">
    <source>
        <dbReference type="SAM" id="MobiDB-lite"/>
    </source>
</evidence>
<evidence type="ECO:0000305" key="5"/>
<name>GPR9_AMPAM</name>
<proteinExistence type="inferred from homology"/>
<sequence length="476" mass="53246">MEGPPLSPAPADNVTLNVSCGRPATLFDWADHRLISLLALAFLNLMVVAGNLLVVMAVFVHSKLRTVTNLFIVSLACADLLVGMLVLPFSATLEVLDVWLYGDVWCSVWLAVDVWMCTSSILNLCAISLDRYLAVSQPISYPSLMSTRRAKQLIAAVWVLSFVICFPPLVGWNDRPGTLIGSRGSSACRLTCELTNERGYVIYSALGSFFLPSTVMLFFYGRIYRTAVSTTRAIAQGFRTTKEDEEGRLTLRIHRGRSVTQRAEQAAAGGARAHGQVRLTLSEPGARRQNKPSFVVHCREDSRAKNQYEIYTVVEGDSRPGRRVPQPQRPAKKLSSASQSSEDDSRPPRFISRVSRRNVRHQARRFRMETKAAKTVGIIVGLFILCWLPFFVCYLVRGFCADCVPPLLFSVFFWLGYCNSAVNPCVYALCSRDFRFAFSSILCKCVCRRGAMERRFRRTLLVGNRSQTEEDCEVAD</sequence>
<keyword id="KW-1003">Cell membrane</keyword>
<keyword id="KW-1015">Disulfide bond</keyword>
<keyword id="KW-0297">G-protein coupled receptor</keyword>
<keyword id="KW-0325">Glycoprotein</keyword>
<keyword id="KW-0472">Membrane</keyword>
<keyword id="KW-0675">Receptor</keyword>
<keyword id="KW-0807">Transducer</keyword>
<keyword id="KW-0812">Transmembrane</keyword>
<keyword id="KW-1133">Transmembrane helix</keyword>